<accession>B5ZYU8</accession>
<dbReference type="EMBL" id="CP001191">
    <property type="protein sequence ID" value="ACI54639.1"/>
    <property type="molecule type" value="Genomic_DNA"/>
</dbReference>
<dbReference type="RefSeq" id="WP_003573787.1">
    <property type="nucleotide sequence ID" value="NC_011369.1"/>
</dbReference>
<dbReference type="SMR" id="B5ZYU8"/>
<dbReference type="STRING" id="395492.Rleg2_1345"/>
<dbReference type="GeneID" id="91148141"/>
<dbReference type="KEGG" id="rlt:Rleg2_1345"/>
<dbReference type="eggNOG" id="COG0199">
    <property type="taxonomic scope" value="Bacteria"/>
</dbReference>
<dbReference type="HOGENOM" id="CLU_139869_0_1_5"/>
<dbReference type="Proteomes" id="UP000008330">
    <property type="component" value="Chromosome"/>
</dbReference>
<dbReference type="GO" id="GO:0005737">
    <property type="term" value="C:cytoplasm"/>
    <property type="evidence" value="ECO:0007669"/>
    <property type="project" value="UniProtKB-ARBA"/>
</dbReference>
<dbReference type="GO" id="GO:0015935">
    <property type="term" value="C:small ribosomal subunit"/>
    <property type="evidence" value="ECO:0007669"/>
    <property type="project" value="TreeGrafter"/>
</dbReference>
<dbReference type="GO" id="GO:0019843">
    <property type="term" value="F:rRNA binding"/>
    <property type="evidence" value="ECO:0007669"/>
    <property type="project" value="UniProtKB-UniRule"/>
</dbReference>
<dbReference type="GO" id="GO:0003735">
    <property type="term" value="F:structural constituent of ribosome"/>
    <property type="evidence" value="ECO:0007669"/>
    <property type="project" value="InterPro"/>
</dbReference>
<dbReference type="GO" id="GO:0006412">
    <property type="term" value="P:translation"/>
    <property type="evidence" value="ECO:0007669"/>
    <property type="project" value="UniProtKB-UniRule"/>
</dbReference>
<dbReference type="FunFam" id="1.10.287.1480:FF:000001">
    <property type="entry name" value="30S ribosomal protein S14"/>
    <property type="match status" value="1"/>
</dbReference>
<dbReference type="Gene3D" id="1.10.287.1480">
    <property type="match status" value="1"/>
</dbReference>
<dbReference type="HAMAP" id="MF_00537">
    <property type="entry name" value="Ribosomal_uS14_1"/>
    <property type="match status" value="1"/>
</dbReference>
<dbReference type="InterPro" id="IPR001209">
    <property type="entry name" value="Ribosomal_uS14"/>
</dbReference>
<dbReference type="InterPro" id="IPR023036">
    <property type="entry name" value="Ribosomal_uS14_bac/plastid"/>
</dbReference>
<dbReference type="InterPro" id="IPR018271">
    <property type="entry name" value="Ribosomal_uS14_CS"/>
</dbReference>
<dbReference type="NCBIfam" id="NF006477">
    <property type="entry name" value="PRK08881.1"/>
    <property type="match status" value="1"/>
</dbReference>
<dbReference type="PANTHER" id="PTHR19836">
    <property type="entry name" value="30S RIBOSOMAL PROTEIN S14"/>
    <property type="match status" value="1"/>
</dbReference>
<dbReference type="PANTHER" id="PTHR19836:SF19">
    <property type="entry name" value="SMALL RIBOSOMAL SUBUNIT PROTEIN US14M"/>
    <property type="match status" value="1"/>
</dbReference>
<dbReference type="Pfam" id="PF00253">
    <property type="entry name" value="Ribosomal_S14"/>
    <property type="match status" value="1"/>
</dbReference>
<dbReference type="SUPFAM" id="SSF57716">
    <property type="entry name" value="Glucocorticoid receptor-like (DNA-binding domain)"/>
    <property type="match status" value="1"/>
</dbReference>
<dbReference type="PROSITE" id="PS00527">
    <property type="entry name" value="RIBOSOMAL_S14"/>
    <property type="match status" value="1"/>
</dbReference>
<comment type="function">
    <text evidence="1">Binds 16S rRNA, required for the assembly of 30S particles and may also be responsible for determining the conformation of the 16S rRNA at the A site.</text>
</comment>
<comment type="subunit">
    <text evidence="1">Part of the 30S ribosomal subunit. Contacts proteins S3 and S10.</text>
</comment>
<comment type="similarity">
    <text evidence="1">Belongs to the universal ribosomal protein uS14 family.</text>
</comment>
<gene>
    <name evidence="1" type="primary">rpsN</name>
    <name type="ordered locus">Rleg2_1345</name>
</gene>
<proteinExistence type="inferred from homology"/>
<organism>
    <name type="scientific">Rhizobium leguminosarum bv. trifolii (strain WSM2304)</name>
    <dbReference type="NCBI Taxonomy" id="395492"/>
    <lineage>
        <taxon>Bacteria</taxon>
        <taxon>Pseudomonadati</taxon>
        <taxon>Pseudomonadota</taxon>
        <taxon>Alphaproteobacteria</taxon>
        <taxon>Hyphomicrobiales</taxon>
        <taxon>Rhizobiaceae</taxon>
        <taxon>Rhizobium/Agrobacterium group</taxon>
        <taxon>Rhizobium</taxon>
    </lineage>
</organism>
<name>RS14_RHILW</name>
<protein>
    <recommendedName>
        <fullName evidence="1">Small ribosomal subunit protein uS14</fullName>
    </recommendedName>
    <alternativeName>
        <fullName evidence="2">30S ribosomal protein S14</fullName>
    </alternativeName>
</protein>
<evidence type="ECO:0000255" key="1">
    <source>
        <dbReference type="HAMAP-Rule" id="MF_00537"/>
    </source>
</evidence>
<evidence type="ECO:0000305" key="2"/>
<reference key="1">
    <citation type="journal article" date="2010" name="Stand. Genomic Sci.">
        <title>Complete genome sequence of Rhizobium leguminosarum bv trifolii strain WSM2304, an effective microsymbiont of the South American clover Trifolium polymorphum.</title>
        <authorList>
            <person name="Reeve W."/>
            <person name="O'Hara G."/>
            <person name="Chain P."/>
            <person name="Ardley J."/>
            <person name="Brau L."/>
            <person name="Nandesena K."/>
            <person name="Tiwari R."/>
            <person name="Malfatti S."/>
            <person name="Kiss H."/>
            <person name="Lapidus A."/>
            <person name="Copeland A."/>
            <person name="Nolan M."/>
            <person name="Land M."/>
            <person name="Ivanova N."/>
            <person name="Mavromatis K."/>
            <person name="Markowitz V."/>
            <person name="Kyrpides N."/>
            <person name="Melino V."/>
            <person name="Denton M."/>
            <person name="Yates R."/>
            <person name="Howieson J."/>
        </authorList>
    </citation>
    <scope>NUCLEOTIDE SEQUENCE [LARGE SCALE GENOMIC DNA]</scope>
    <source>
        <strain>WSM2304</strain>
    </source>
</reference>
<sequence length="101" mass="11406">MAKTSAVEKNKRRRTTVANQAAKRAALKAIIMNQALPIEERFKASIKLASLPRDGSKTRIRNRCEVSGRPRAYYRKLRMSRIALRELGNLGKVPGIVKSSW</sequence>
<keyword id="KW-1185">Reference proteome</keyword>
<keyword id="KW-0687">Ribonucleoprotein</keyword>
<keyword id="KW-0689">Ribosomal protein</keyword>
<keyword id="KW-0694">RNA-binding</keyword>
<keyword id="KW-0699">rRNA-binding</keyword>
<feature type="chain" id="PRO_1000128536" description="Small ribosomal subunit protein uS14">
    <location>
        <begin position="1"/>
        <end position="101"/>
    </location>
</feature>